<proteinExistence type="inferred from homology"/>
<keyword id="KW-0131">Cell cycle</keyword>
<keyword id="KW-0132">Cell division</keyword>
<keyword id="KW-0143">Chaperone</keyword>
<keyword id="KW-0963">Cytoplasm</keyword>
<keyword id="KW-0413">Isomerase</keyword>
<keyword id="KW-0697">Rotamase</keyword>
<comment type="function">
    <text evidence="1">Involved in protein export. Acts as a chaperone by maintaining the newly synthesized protein in an open conformation. Functions as a peptidyl-prolyl cis-trans isomerase.</text>
</comment>
<comment type="catalytic activity">
    <reaction evidence="1">
        <text>[protein]-peptidylproline (omega=180) = [protein]-peptidylproline (omega=0)</text>
        <dbReference type="Rhea" id="RHEA:16237"/>
        <dbReference type="Rhea" id="RHEA-COMP:10747"/>
        <dbReference type="Rhea" id="RHEA-COMP:10748"/>
        <dbReference type="ChEBI" id="CHEBI:83833"/>
        <dbReference type="ChEBI" id="CHEBI:83834"/>
        <dbReference type="EC" id="5.2.1.8"/>
    </reaction>
</comment>
<comment type="subcellular location">
    <subcellularLocation>
        <location>Cytoplasm</location>
    </subcellularLocation>
    <text evidence="1">About half TF is bound to the ribosome near the polypeptide exit tunnel while the other half is free in the cytoplasm.</text>
</comment>
<comment type="domain">
    <text evidence="1">Consists of 3 domains; the N-terminus binds the ribosome, the middle domain has PPIase activity, while the C-terminus has intrinsic chaperone activity on its own.</text>
</comment>
<comment type="similarity">
    <text evidence="1">Belongs to the FKBP-type PPIase family. Tig subfamily.</text>
</comment>
<evidence type="ECO:0000255" key="1">
    <source>
        <dbReference type="HAMAP-Rule" id="MF_00303"/>
    </source>
</evidence>
<accession>A7GTF2</accession>
<organism>
    <name type="scientific">Bacillus cytotoxicus (strain DSM 22905 / CIP 110041 / 391-98 / NVH 391-98)</name>
    <dbReference type="NCBI Taxonomy" id="315749"/>
    <lineage>
        <taxon>Bacteria</taxon>
        <taxon>Bacillati</taxon>
        <taxon>Bacillota</taxon>
        <taxon>Bacilli</taxon>
        <taxon>Bacillales</taxon>
        <taxon>Bacillaceae</taxon>
        <taxon>Bacillus</taxon>
        <taxon>Bacillus cereus group</taxon>
    </lineage>
</organism>
<protein>
    <recommendedName>
        <fullName evidence="1">Trigger factor</fullName>
        <shortName evidence="1">TF</shortName>
        <ecNumber evidence="1">5.2.1.8</ecNumber>
    </recommendedName>
    <alternativeName>
        <fullName evidence="1">PPIase</fullName>
    </alternativeName>
</protein>
<dbReference type="EC" id="5.2.1.8" evidence="1"/>
<dbReference type="EMBL" id="CP000764">
    <property type="protein sequence ID" value="ABS23410.1"/>
    <property type="molecule type" value="Genomic_DNA"/>
</dbReference>
<dbReference type="RefSeq" id="WP_012095646.1">
    <property type="nucleotide sequence ID" value="NC_009674.1"/>
</dbReference>
<dbReference type="SMR" id="A7GTF2"/>
<dbReference type="STRING" id="315749.Bcer98_3187"/>
<dbReference type="GeneID" id="33898436"/>
<dbReference type="KEGG" id="bcy:Bcer98_3187"/>
<dbReference type="eggNOG" id="COG0544">
    <property type="taxonomic scope" value="Bacteria"/>
</dbReference>
<dbReference type="HOGENOM" id="CLU_033058_3_2_9"/>
<dbReference type="OrthoDB" id="9767721at2"/>
<dbReference type="Proteomes" id="UP000002300">
    <property type="component" value="Chromosome"/>
</dbReference>
<dbReference type="GO" id="GO:0005737">
    <property type="term" value="C:cytoplasm"/>
    <property type="evidence" value="ECO:0007669"/>
    <property type="project" value="UniProtKB-SubCell"/>
</dbReference>
<dbReference type="GO" id="GO:0003755">
    <property type="term" value="F:peptidyl-prolyl cis-trans isomerase activity"/>
    <property type="evidence" value="ECO:0007669"/>
    <property type="project" value="UniProtKB-UniRule"/>
</dbReference>
<dbReference type="GO" id="GO:0044183">
    <property type="term" value="F:protein folding chaperone"/>
    <property type="evidence" value="ECO:0007669"/>
    <property type="project" value="TreeGrafter"/>
</dbReference>
<dbReference type="GO" id="GO:0043022">
    <property type="term" value="F:ribosome binding"/>
    <property type="evidence" value="ECO:0007669"/>
    <property type="project" value="TreeGrafter"/>
</dbReference>
<dbReference type="GO" id="GO:0051083">
    <property type="term" value="P:'de novo' cotranslational protein folding"/>
    <property type="evidence" value="ECO:0007669"/>
    <property type="project" value="TreeGrafter"/>
</dbReference>
<dbReference type="GO" id="GO:0051301">
    <property type="term" value="P:cell division"/>
    <property type="evidence" value="ECO:0007669"/>
    <property type="project" value="UniProtKB-KW"/>
</dbReference>
<dbReference type="GO" id="GO:0061077">
    <property type="term" value="P:chaperone-mediated protein folding"/>
    <property type="evidence" value="ECO:0007669"/>
    <property type="project" value="TreeGrafter"/>
</dbReference>
<dbReference type="GO" id="GO:0015031">
    <property type="term" value="P:protein transport"/>
    <property type="evidence" value="ECO:0007669"/>
    <property type="project" value="UniProtKB-UniRule"/>
</dbReference>
<dbReference type="GO" id="GO:0043335">
    <property type="term" value="P:protein unfolding"/>
    <property type="evidence" value="ECO:0007669"/>
    <property type="project" value="TreeGrafter"/>
</dbReference>
<dbReference type="FunFam" id="3.10.50.40:FF:000001">
    <property type="entry name" value="Trigger factor"/>
    <property type="match status" value="1"/>
</dbReference>
<dbReference type="FunFam" id="3.30.70.1050:FF:000002">
    <property type="entry name" value="Trigger factor"/>
    <property type="match status" value="1"/>
</dbReference>
<dbReference type="Gene3D" id="3.10.50.40">
    <property type="match status" value="1"/>
</dbReference>
<dbReference type="Gene3D" id="3.30.70.1050">
    <property type="entry name" value="Trigger factor ribosome-binding domain"/>
    <property type="match status" value="1"/>
</dbReference>
<dbReference type="Gene3D" id="1.10.3120.10">
    <property type="entry name" value="Trigger factor, C-terminal domain"/>
    <property type="match status" value="1"/>
</dbReference>
<dbReference type="HAMAP" id="MF_00303">
    <property type="entry name" value="Trigger_factor_Tig"/>
    <property type="match status" value="1"/>
</dbReference>
<dbReference type="InterPro" id="IPR046357">
    <property type="entry name" value="PPIase_dom_sf"/>
</dbReference>
<dbReference type="InterPro" id="IPR001179">
    <property type="entry name" value="PPIase_FKBP_dom"/>
</dbReference>
<dbReference type="InterPro" id="IPR005215">
    <property type="entry name" value="Trig_fac"/>
</dbReference>
<dbReference type="InterPro" id="IPR008880">
    <property type="entry name" value="Trigger_fac_C"/>
</dbReference>
<dbReference type="InterPro" id="IPR037041">
    <property type="entry name" value="Trigger_fac_C_sf"/>
</dbReference>
<dbReference type="InterPro" id="IPR008881">
    <property type="entry name" value="Trigger_fac_ribosome-bd_bac"/>
</dbReference>
<dbReference type="InterPro" id="IPR036611">
    <property type="entry name" value="Trigger_fac_ribosome-bd_sf"/>
</dbReference>
<dbReference type="InterPro" id="IPR027304">
    <property type="entry name" value="Trigger_fact/SurA_dom_sf"/>
</dbReference>
<dbReference type="NCBIfam" id="TIGR00115">
    <property type="entry name" value="tig"/>
    <property type="match status" value="1"/>
</dbReference>
<dbReference type="PANTHER" id="PTHR30560">
    <property type="entry name" value="TRIGGER FACTOR CHAPERONE AND PEPTIDYL-PROLYL CIS/TRANS ISOMERASE"/>
    <property type="match status" value="1"/>
</dbReference>
<dbReference type="PANTHER" id="PTHR30560:SF3">
    <property type="entry name" value="TRIGGER FACTOR-LIKE PROTEIN TIG, CHLOROPLASTIC"/>
    <property type="match status" value="1"/>
</dbReference>
<dbReference type="Pfam" id="PF00254">
    <property type="entry name" value="FKBP_C"/>
    <property type="match status" value="1"/>
</dbReference>
<dbReference type="Pfam" id="PF05698">
    <property type="entry name" value="Trigger_C"/>
    <property type="match status" value="1"/>
</dbReference>
<dbReference type="Pfam" id="PF05697">
    <property type="entry name" value="Trigger_N"/>
    <property type="match status" value="1"/>
</dbReference>
<dbReference type="PIRSF" id="PIRSF003095">
    <property type="entry name" value="Trigger_factor"/>
    <property type="match status" value="1"/>
</dbReference>
<dbReference type="SUPFAM" id="SSF54534">
    <property type="entry name" value="FKBP-like"/>
    <property type="match status" value="1"/>
</dbReference>
<dbReference type="SUPFAM" id="SSF109998">
    <property type="entry name" value="Triger factor/SurA peptide-binding domain-like"/>
    <property type="match status" value="1"/>
</dbReference>
<dbReference type="SUPFAM" id="SSF102735">
    <property type="entry name" value="Trigger factor ribosome-binding domain"/>
    <property type="match status" value="1"/>
</dbReference>
<dbReference type="PROSITE" id="PS50059">
    <property type="entry name" value="FKBP_PPIASE"/>
    <property type="match status" value="1"/>
</dbReference>
<reference key="1">
    <citation type="journal article" date="2008" name="Chem. Biol. Interact.">
        <title>Extending the Bacillus cereus group genomics to putative food-borne pathogens of different toxicity.</title>
        <authorList>
            <person name="Lapidus A."/>
            <person name="Goltsman E."/>
            <person name="Auger S."/>
            <person name="Galleron N."/>
            <person name="Segurens B."/>
            <person name="Dossat C."/>
            <person name="Land M.L."/>
            <person name="Broussolle V."/>
            <person name="Brillard J."/>
            <person name="Guinebretiere M.-H."/>
            <person name="Sanchis V."/>
            <person name="Nguen-the C."/>
            <person name="Lereclus D."/>
            <person name="Richardson P."/>
            <person name="Wincker P."/>
            <person name="Weissenbach J."/>
            <person name="Ehrlich S.D."/>
            <person name="Sorokin A."/>
        </authorList>
    </citation>
    <scope>NUCLEOTIDE SEQUENCE [LARGE SCALE GENOMIC DNA]</scope>
    <source>
        <strain>DSM 22905 / CIP 110041 / 391-98 / NVH 391-98</strain>
    </source>
</reference>
<name>TIG_BACCN</name>
<gene>
    <name evidence="1" type="primary">tig</name>
    <name type="ordered locus">Bcer98_3187</name>
</gene>
<feature type="chain" id="PRO_1000079031" description="Trigger factor">
    <location>
        <begin position="1"/>
        <end position="427"/>
    </location>
</feature>
<feature type="domain" description="PPIase FKBP-type" evidence="1">
    <location>
        <begin position="163"/>
        <end position="248"/>
    </location>
</feature>
<sequence length="427" mass="47669">MAAKWEKLEGNVGVLTIEVDAKEVNKSLDAAFKKVVKTINVPGFRKGKMPRPLFEQRFGVESLYQDALDIILPKAYSEAIDETGIFPVAHPEIDIEKFEKNENLVFTAKVTVKPEVKLGEYKGLAVEKIDTTVTDEDVENELKALQERQAELVVKEDGTVENGDTAVIDFEGFVNGEAFEGGKGENYSLAIGSGTFIPGFEEQLIGLKAGESKDVEVTFPEEYHAEELAGKPATFKVTVHEIKAKELPELNDEFAKDVNEEVATLDELKAKLRTDLEEGKKHEAEHKVRDEVVEKAAANAEIDIPEAMIETELDRMVREFEQRLSQQGMNLELYYQFTGTDADKLKEQMKEDAQKRVRINLVLEAIIKAENIEVAEEEVNAEIEKMAEMYNMPVDAIKQALGSAEALAEDLKVRKAVDFLVDNSKAA</sequence>